<gene>
    <name evidence="4 10 12" type="primary">IGHV8-51-1</name>
</gene>
<comment type="function">
    <text evidence="5 6 7 8 9">Probable non-functional open reading frame (ORF) of V region of the variable domain of immunoglobulin heavy chains (PubMed:24600447). Non-functional ORF generally cannot participate in the synthesis of a productive immunoglobulin chain due to altered V-(D)-J or switch recombination and/or splicing site (at mRNA level) and/or conserved amino acid change (protein level) (PubMed:9619395). Immunoglobulins, also known as antibodies, are membrane-bound or secreted glycoproteins produced by B lymphocytes. In the recognition phase of humoral immunity, the membrane-bound immunoglobulins serve as receptors which, upon binding of a specific antigen, trigger the clonal expansion and differentiation of B lymphocytes into immunoglobulins-secreting plasma cells. Secreted immunoglobulins mediate the effector phase of humoral immunity, which results in the elimination of bound antigens (PubMed:20176268, PubMed:22158414). The antigen binding site is formed by the variable domain of one heavy chain, together with that of its associated light chain. Thus, each immunoglobulin has two antigen binding sites with remarkable affinity for a particular antigen. The variable domains are assembled by a process called V-(D)-J rearrangement and can then be subjected to somatic hypermutations which, after exposure to antigen and selection, allow affinity maturation for a particular antigen (PubMed:17576170, PubMed:20176268, PubMed:22158414, PubMed:24600447).</text>
</comment>
<comment type="subunit">
    <text evidence="6">Immunoglobulins are composed of two identical heavy chains and two identical light chains; disulfide-linked.</text>
</comment>
<comment type="subcellular location">
    <subcellularLocation>
        <location evidence="6 7">Secreted</location>
    </subcellularLocation>
    <subcellularLocation>
        <location evidence="6 7">Cell membrane</location>
    </subcellularLocation>
</comment>
<comment type="polymorphism">
    <text evidence="11">There are several alleles. The sequence shown is that of IMGT allele IGHV8-51-1*02.</text>
</comment>
<comment type="caution">
    <text evidence="9 11">Most probably a non-functional protein that cannot participate to the synthesis of a productive immunoglobulin chain due to an unusual recombination signal (RS) sequence altering V-(D)-J recombination (PubMed:9619395).</text>
</comment>
<feature type="signal peptide" evidence="2">
    <location>
        <begin position="1"/>
        <end position="17"/>
    </location>
</feature>
<feature type="chain" id="PRO_0000450585" description="Probable non-functional immunoglobulin heavy variable 8-51-1" evidence="2">
    <location>
        <begin position="18"/>
        <end position="115"/>
    </location>
</feature>
<feature type="domain" description="Ig-like" evidence="3">
    <location>
        <begin position="19"/>
        <end position="115" status="greater than"/>
    </location>
</feature>
<feature type="region of interest" description="Framework-1" evidence="1">
    <location>
        <begin position="18"/>
        <end position="42"/>
    </location>
</feature>
<feature type="region of interest" description="Complementarity-determining-1" evidence="1">
    <location>
        <begin position="43"/>
        <end position="50"/>
    </location>
</feature>
<feature type="region of interest" description="Framework-2" evidence="1">
    <location>
        <begin position="51"/>
        <end position="67"/>
    </location>
</feature>
<feature type="region of interest" description="Complementarity-determining-2" evidence="1">
    <location>
        <begin position="68"/>
        <end position="75"/>
    </location>
</feature>
<feature type="region of interest" description="Framework-3" evidence="1">
    <location>
        <begin position="76"/>
        <end position="113"/>
    </location>
</feature>
<feature type="region of interest" description="Complementarity-determining-3" evidence="1">
    <location>
        <begin position="114"/>
        <end position="115" status="greater than"/>
    </location>
</feature>
<feature type="disulfide bond" evidence="3">
    <location>
        <begin position="55"/>
        <end position="113"/>
    </location>
</feature>
<feature type="non-terminal residue">
    <location>
        <position position="115"/>
    </location>
</feature>
<reference key="1">
    <citation type="journal article" date="2003" name="Nature">
        <title>The DNA sequence and analysis of human chromosome 14.</title>
        <authorList>
            <person name="Heilig R."/>
            <person name="Eckenberg R."/>
            <person name="Petit J.-L."/>
            <person name="Fonknechten N."/>
            <person name="Da Silva C."/>
            <person name="Cattolico L."/>
            <person name="Levy M."/>
            <person name="Barbe V."/>
            <person name="De Berardinis V."/>
            <person name="Ureta-Vidal A."/>
            <person name="Pelletier E."/>
            <person name="Vico V."/>
            <person name="Anthouard V."/>
            <person name="Rowen L."/>
            <person name="Madan A."/>
            <person name="Qin S."/>
            <person name="Sun H."/>
            <person name="Du H."/>
            <person name="Pepin K."/>
            <person name="Artiguenave F."/>
            <person name="Robert C."/>
            <person name="Cruaud C."/>
            <person name="Bruels T."/>
            <person name="Jaillon O."/>
            <person name="Friedlander L."/>
            <person name="Samson G."/>
            <person name="Brottier P."/>
            <person name="Cure S."/>
            <person name="Segurens B."/>
            <person name="Aniere F."/>
            <person name="Samain S."/>
            <person name="Crespeau H."/>
            <person name="Abbasi N."/>
            <person name="Aiach N."/>
            <person name="Boscus D."/>
            <person name="Dickhoff R."/>
            <person name="Dors M."/>
            <person name="Dubois I."/>
            <person name="Friedman C."/>
            <person name="Gouyvenoux M."/>
            <person name="James R."/>
            <person name="Madan A."/>
            <person name="Mairey-Estrada B."/>
            <person name="Mangenot S."/>
            <person name="Martins N."/>
            <person name="Menard M."/>
            <person name="Oztas S."/>
            <person name="Ratcliffe A."/>
            <person name="Shaffer T."/>
            <person name="Trask B."/>
            <person name="Vacherie B."/>
            <person name="Bellemere C."/>
            <person name="Belser C."/>
            <person name="Besnard-Gonnet M."/>
            <person name="Bartol-Mavel D."/>
            <person name="Boutard M."/>
            <person name="Briez-Silla S."/>
            <person name="Combette S."/>
            <person name="Dufosse-Laurent V."/>
            <person name="Ferron C."/>
            <person name="Lechaplais C."/>
            <person name="Louesse C."/>
            <person name="Muselet D."/>
            <person name="Magdelenat G."/>
            <person name="Pateau E."/>
            <person name="Petit E."/>
            <person name="Sirvain-Trukniewicz P."/>
            <person name="Trybou A."/>
            <person name="Vega-Czarny N."/>
            <person name="Bataille E."/>
            <person name="Bluet E."/>
            <person name="Bordelais I."/>
            <person name="Dubois M."/>
            <person name="Dumont C."/>
            <person name="Guerin T."/>
            <person name="Haffray S."/>
            <person name="Hammadi R."/>
            <person name="Muanga J."/>
            <person name="Pellouin V."/>
            <person name="Robert D."/>
            <person name="Wunderle E."/>
            <person name="Gauguet G."/>
            <person name="Roy A."/>
            <person name="Sainte-Marthe L."/>
            <person name="Verdier J."/>
            <person name="Verdier-Discala C."/>
            <person name="Hillier L.W."/>
            <person name="Fulton L."/>
            <person name="McPherson J."/>
            <person name="Matsuda F."/>
            <person name="Wilson R."/>
            <person name="Scarpelli C."/>
            <person name="Gyapay G."/>
            <person name="Wincker P."/>
            <person name="Saurin W."/>
            <person name="Quetier F."/>
            <person name="Waterston R."/>
            <person name="Hood L."/>
            <person name="Weissenbach J."/>
        </authorList>
    </citation>
    <scope>NUCLEOTIDE SEQUENCE [LARGE SCALE GENOMIC DNA] (IMGT ALLELE IGHV8-51-1*02)</scope>
</reference>
<reference key="2">
    <citation type="journal article" date="1998" name="Exp. Clin. Immunogenet.">
        <title>IMGT (ImMunoGeneTics) locus on focus. A new section of Experimental and Clinical Immunogenetics.</title>
        <authorList>
            <person name="Lefranc M.P."/>
        </authorList>
    </citation>
    <scope>CHARACTERIZATION</scope>
</reference>
<reference key="3">
    <citation type="journal article" date="2001" name="Exp. Clin. Immunogenet.">
        <title>Nomenclature of the human immunoglobulin heavy (IGH) genes.</title>
        <authorList>
            <person name="Lefranc M.P."/>
        </authorList>
    </citation>
    <scope>NOMENCLATURE</scope>
</reference>
<reference key="4">
    <citation type="book" date="2001" name="The Immunoglobulin FactsBook.">
        <title>The Immunoglobulin FactsBook.</title>
        <editorList>
            <person name="Lefranc M.P."/>
            <person name="Lefranc G."/>
        </editorList>
        <authorList>
            <person name="Lefranc M.P."/>
            <person name="Lefranc G."/>
        </authorList>
    </citation>
    <scope>NOMENCLATURE</scope>
</reference>
<reference key="5">
    <citation type="journal article" date="2007" name="Annu. Rev. Genet.">
        <title>Immunoglobulin somatic hypermutation.</title>
        <authorList>
            <person name="Teng G."/>
            <person name="Papavasiliou F.N."/>
        </authorList>
    </citation>
    <scope>REVIEW ON SOMATIC HYPERMUTATION</scope>
</reference>
<reference key="6">
    <citation type="journal article" date="2010" name="J. Allergy Clin. Immunol.">
        <title>Structure and function of immunoglobulins.</title>
        <authorList>
            <person name="Schroeder H.W. Jr."/>
            <person name="Cavacini L."/>
        </authorList>
    </citation>
    <scope>REVIEW ON IMMUNOGLOBULINS</scope>
</reference>
<reference key="7">
    <citation type="journal article" date="2012" name="Nat. Rev. Immunol.">
        <title>Molecular programming of B cell memory.</title>
        <authorList>
            <person name="McHeyzer-Williams M."/>
            <person name="Okitsu S."/>
            <person name="Wang N."/>
            <person name="McHeyzer-Williams L."/>
        </authorList>
    </citation>
    <scope>REVIEW ON FUNCTION</scope>
</reference>
<reference key="8">
    <citation type="journal article" date="2014" name="Front. Immunol.">
        <title>Immunoglobulin and T Cell Receptor Genes: IMGT((R)) and the Birth and Rise of Immunoinformatics.</title>
        <authorList>
            <person name="Lefranc M.P."/>
        </authorList>
    </citation>
    <scope>NOMENCLATURE</scope>
</reference>
<dbReference type="EMBL" id="AC244452">
    <property type="status" value="NOT_ANNOTATED_CDS"/>
    <property type="molecule type" value="Genomic_DNA"/>
</dbReference>
<dbReference type="SMR" id="P0DTE2"/>
<dbReference type="FunCoup" id="P0DTE2">
    <property type="interactions" value="94"/>
</dbReference>
<dbReference type="AGR" id="HGNC:5704"/>
<dbReference type="GeneCards" id="IGHV8-51-1"/>
<dbReference type="HGNC" id="HGNC:5704">
    <property type="gene designation" value="IGHV8-51-1"/>
</dbReference>
<dbReference type="neXtProt" id="NX_P0DTE2"/>
<dbReference type="InParanoid" id="P0DTE2"/>
<dbReference type="OrthoDB" id="9945861at2759"/>
<dbReference type="PRO" id="PR:P0DTE2"/>
<dbReference type="Proteomes" id="UP000005640">
    <property type="component" value="Unplaced"/>
</dbReference>
<dbReference type="GO" id="GO:0005576">
    <property type="term" value="C:extracellular region"/>
    <property type="evidence" value="ECO:0007669"/>
    <property type="project" value="UniProtKB-SubCell"/>
</dbReference>
<dbReference type="GO" id="GO:0019814">
    <property type="term" value="C:immunoglobulin complex"/>
    <property type="evidence" value="ECO:0007669"/>
    <property type="project" value="UniProtKB-KW"/>
</dbReference>
<dbReference type="GO" id="GO:0005886">
    <property type="term" value="C:plasma membrane"/>
    <property type="evidence" value="ECO:0007669"/>
    <property type="project" value="UniProtKB-SubCell"/>
</dbReference>
<dbReference type="GO" id="GO:0003823">
    <property type="term" value="F:antigen binding"/>
    <property type="evidence" value="ECO:0000318"/>
    <property type="project" value="GO_Central"/>
</dbReference>
<dbReference type="GO" id="GO:0016064">
    <property type="term" value="P:immunoglobulin mediated immune response"/>
    <property type="evidence" value="ECO:0000318"/>
    <property type="project" value="GO_Central"/>
</dbReference>
<dbReference type="Gene3D" id="2.60.40.10">
    <property type="entry name" value="Immunoglobulins"/>
    <property type="match status" value="1"/>
</dbReference>
<dbReference type="InterPro" id="IPR036179">
    <property type="entry name" value="Ig-like_dom_sf"/>
</dbReference>
<dbReference type="InterPro" id="IPR013783">
    <property type="entry name" value="Ig-like_fold"/>
</dbReference>
<dbReference type="InterPro" id="IPR013106">
    <property type="entry name" value="Ig_V-set"/>
</dbReference>
<dbReference type="InterPro" id="IPR050199">
    <property type="entry name" value="IgHV"/>
</dbReference>
<dbReference type="PANTHER" id="PTHR23266">
    <property type="entry name" value="IMMUNOGLOBULIN HEAVY CHAIN"/>
    <property type="match status" value="1"/>
</dbReference>
<dbReference type="SMART" id="SM00406">
    <property type="entry name" value="IGv"/>
    <property type="match status" value="1"/>
</dbReference>
<dbReference type="SUPFAM" id="SSF48726">
    <property type="entry name" value="Immunoglobulin"/>
    <property type="match status" value="1"/>
</dbReference>
<proteinExistence type="evidence at protein level"/>
<protein>
    <recommendedName>
        <fullName evidence="11">Probable non-functional immunoglobulin heavy variable 8-51-1</fullName>
    </recommendedName>
</protein>
<accession>P0DTE2</accession>
<sequence>MLVCVLLYSFRLFGIQGEAQLTESGGDLVHLEGPLRLSCAASWFTFSIYEIHWVCQASGKGLEWVAVIWRGESHQYNADYVRGRLTTSRDNTKYMLYMQMISLRTQNMAAFNCAG</sequence>
<evidence type="ECO:0000250" key="1">
    <source>
        <dbReference type="UniProtKB" id="P23083"/>
    </source>
</evidence>
<evidence type="ECO:0000255" key="2"/>
<evidence type="ECO:0000255" key="3">
    <source>
        <dbReference type="PROSITE-ProRule" id="PRU00114"/>
    </source>
</evidence>
<evidence type="ECO:0000303" key="4">
    <source>
    </source>
</evidence>
<evidence type="ECO:0000303" key="5">
    <source>
    </source>
</evidence>
<evidence type="ECO:0000303" key="6">
    <source>
    </source>
</evidence>
<evidence type="ECO:0000303" key="7">
    <source>
    </source>
</evidence>
<evidence type="ECO:0000303" key="8">
    <source>
    </source>
</evidence>
<evidence type="ECO:0000303" key="9">
    <source>
    </source>
</evidence>
<evidence type="ECO:0000303" key="10">
    <source ref="4"/>
</evidence>
<evidence type="ECO:0000305" key="11"/>
<evidence type="ECO:0000312" key="12">
    <source>
        <dbReference type="HGNC" id="HGNC:5704"/>
    </source>
</evidence>
<name>HV511_HUMAN</name>
<organism>
    <name type="scientific">Homo sapiens</name>
    <name type="common">Human</name>
    <dbReference type="NCBI Taxonomy" id="9606"/>
    <lineage>
        <taxon>Eukaryota</taxon>
        <taxon>Metazoa</taxon>
        <taxon>Chordata</taxon>
        <taxon>Craniata</taxon>
        <taxon>Vertebrata</taxon>
        <taxon>Euteleostomi</taxon>
        <taxon>Mammalia</taxon>
        <taxon>Eutheria</taxon>
        <taxon>Euarchontoglires</taxon>
        <taxon>Primates</taxon>
        <taxon>Haplorrhini</taxon>
        <taxon>Catarrhini</taxon>
        <taxon>Hominidae</taxon>
        <taxon>Homo</taxon>
    </lineage>
</organism>
<keyword id="KW-1064">Adaptive immunity</keyword>
<keyword id="KW-1003">Cell membrane</keyword>
<keyword id="KW-1015">Disulfide bond</keyword>
<keyword id="KW-0391">Immunity</keyword>
<keyword id="KW-1280">Immunoglobulin</keyword>
<keyword id="KW-0393">Immunoglobulin domain</keyword>
<keyword id="KW-0472">Membrane</keyword>
<keyword id="KW-1185">Reference proteome</keyword>
<keyword id="KW-0964">Secreted</keyword>
<keyword id="KW-0732">Signal</keyword>